<dbReference type="EC" id="1.6.1.1" evidence="1"/>
<dbReference type="EMBL" id="AL590842">
    <property type="protein sequence ID" value="CAL22499.1"/>
    <property type="molecule type" value="Genomic_DNA"/>
</dbReference>
<dbReference type="EMBL" id="AE009952">
    <property type="protein sequence ID" value="AAM83912.1"/>
    <property type="status" value="ALT_INIT"/>
    <property type="molecule type" value="Genomic_DNA"/>
</dbReference>
<dbReference type="EMBL" id="AE017042">
    <property type="protein sequence ID" value="AAS63304.1"/>
    <property type="molecule type" value="Genomic_DNA"/>
</dbReference>
<dbReference type="PIR" id="AH0476">
    <property type="entry name" value="AH0476"/>
</dbReference>
<dbReference type="RefSeq" id="WP_002209477.1">
    <property type="nucleotide sequence ID" value="NZ_WUCM01000072.1"/>
</dbReference>
<dbReference type="RefSeq" id="YP_002348789.1">
    <property type="nucleotide sequence ID" value="NC_003143.1"/>
</dbReference>
<dbReference type="SMR" id="Q8ZA97"/>
<dbReference type="IntAct" id="Q8ZA97">
    <property type="interactions" value="1"/>
</dbReference>
<dbReference type="STRING" id="214092.YPO3914"/>
<dbReference type="PaxDb" id="214092-YPO3914"/>
<dbReference type="EnsemblBacteria" id="AAS63304">
    <property type="protein sequence ID" value="AAS63304"/>
    <property type="gene ID" value="YP_3134"/>
</dbReference>
<dbReference type="GeneID" id="96663600"/>
<dbReference type="KEGG" id="ype:YPO3914"/>
<dbReference type="KEGG" id="ypk:y0321"/>
<dbReference type="KEGG" id="ypm:YP_3134"/>
<dbReference type="PATRIC" id="fig|214092.21.peg.4443"/>
<dbReference type="eggNOG" id="COG1249">
    <property type="taxonomic scope" value="Bacteria"/>
</dbReference>
<dbReference type="HOGENOM" id="CLU_016755_0_0_6"/>
<dbReference type="OMA" id="SHCLMAV"/>
<dbReference type="OrthoDB" id="9800167at2"/>
<dbReference type="Proteomes" id="UP000000815">
    <property type="component" value="Chromosome"/>
</dbReference>
<dbReference type="Proteomes" id="UP000001019">
    <property type="component" value="Chromosome"/>
</dbReference>
<dbReference type="Proteomes" id="UP000002490">
    <property type="component" value="Chromosome"/>
</dbReference>
<dbReference type="GO" id="GO:0005829">
    <property type="term" value="C:cytosol"/>
    <property type="evidence" value="ECO:0000318"/>
    <property type="project" value="GO_Central"/>
</dbReference>
<dbReference type="GO" id="GO:0004148">
    <property type="term" value="F:dihydrolipoyl dehydrogenase (NADH) activity"/>
    <property type="evidence" value="ECO:0000318"/>
    <property type="project" value="GO_Central"/>
</dbReference>
<dbReference type="GO" id="GO:0050660">
    <property type="term" value="F:flavin adenine dinucleotide binding"/>
    <property type="evidence" value="ECO:0000318"/>
    <property type="project" value="GO_Central"/>
</dbReference>
<dbReference type="GO" id="GO:0003957">
    <property type="term" value="F:NAD(P)+ transhydrogenase (Si-specific) activity"/>
    <property type="evidence" value="ECO:0007669"/>
    <property type="project" value="UniProtKB-UniRule"/>
</dbReference>
<dbReference type="GO" id="GO:0006103">
    <property type="term" value="P:2-oxoglutarate metabolic process"/>
    <property type="evidence" value="ECO:0000318"/>
    <property type="project" value="GO_Central"/>
</dbReference>
<dbReference type="GO" id="GO:0006739">
    <property type="term" value="P:NADP metabolic process"/>
    <property type="evidence" value="ECO:0007669"/>
    <property type="project" value="UniProtKB-UniRule"/>
</dbReference>
<dbReference type="GO" id="GO:0006090">
    <property type="term" value="P:pyruvate metabolic process"/>
    <property type="evidence" value="ECO:0000318"/>
    <property type="project" value="GO_Central"/>
</dbReference>
<dbReference type="FunFam" id="3.30.390.30:FF:000002">
    <property type="entry name" value="Soluble pyridine nucleotide transhydrogenase"/>
    <property type="match status" value="1"/>
</dbReference>
<dbReference type="FunFam" id="3.50.50.60:FF:000008">
    <property type="entry name" value="Soluble pyridine nucleotide transhydrogenase"/>
    <property type="match status" value="1"/>
</dbReference>
<dbReference type="Gene3D" id="3.30.390.30">
    <property type="match status" value="1"/>
</dbReference>
<dbReference type="Gene3D" id="3.50.50.60">
    <property type="entry name" value="FAD/NAD(P)-binding domain"/>
    <property type="match status" value="2"/>
</dbReference>
<dbReference type="HAMAP" id="MF_00247">
    <property type="entry name" value="SthA"/>
    <property type="match status" value="1"/>
</dbReference>
<dbReference type="InterPro" id="IPR050151">
    <property type="entry name" value="Class-I_Pyr_Nuc-Dis_Oxidored"/>
</dbReference>
<dbReference type="InterPro" id="IPR036188">
    <property type="entry name" value="FAD/NAD-bd_sf"/>
</dbReference>
<dbReference type="InterPro" id="IPR023753">
    <property type="entry name" value="FAD/NAD-binding_dom"/>
</dbReference>
<dbReference type="InterPro" id="IPR016156">
    <property type="entry name" value="FAD/NAD-linked_Rdtase_dimer_sf"/>
</dbReference>
<dbReference type="InterPro" id="IPR001100">
    <property type="entry name" value="Pyr_nuc-diS_OxRdtase"/>
</dbReference>
<dbReference type="InterPro" id="IPR004099">
    <property type="entry name" value="Pyr_nucl-diS_OxRdtase_dimer"/>
</dbReference>
<dbReference type="InterPro" id="IPR022962">
    <property type="entry name" value="STH_gammaproteobact"/>
</dbReference>
<dbReference type="NCBIfam" id="NF003585">
    <property type="entry name" value="PRK05249.1"/>
    <property type="match status" value="1"/>
</dbReference>
<dbReference type="PANTHER" id="PTHR22912">
    <property type="entry name" value="DISULFIDE OXIDOREDUCTASE"/>
    <property type="match status" value="1"/>
</dbReference>
<dbReference type="PANTHER" id="PTHR22912:SF93">
    <property type="entry name" value="SOLUBLE PYRIDINE NUCLEOTIDE TRANSHYDROGENASE"/>
    <property type="match status" value="1"/>
</dbReference>
<dbReference type="Pfam" id="PF07992">
    <property type="entry name" value="Pyr_redox_2"/>
    <property type="match status" value="1"/>
</dbReference>
<dbReference type="Pfam" id="PF02852">
    <property type="entry name" value="Pyr_redox_dim"/>
    <property type="match status" value="1"/>
</dbReference>
<dbReference type="PIRSF" id="PIRSF000350">
    <property type="entry name" value="Mercury_reductase_MerA"/>
    <property type="match status" value="1"/>
</dbReference>
<dbReference type="PRINTS" id="PR00368">
    <property type="entry name" value="FADPNR"/>
</dbReference>
<dbReference type="PRINTS" id="PR00411">
    <property type="entry name" value="PNDRDTASEI"/>
</dbReference>
<dbReference type="SUPFAM" id="SSF51905">
    <property type="entry name" value="FAD/NAD(P)-binding domain"/>
    <property type="match status" value="1"/>
</dbReference>
<dbReference type="SUPFAM" id="SSF55424">
    <property type="entry name" value="FAD/NAD-linked reductases, dimerisation (C-terminal) domain"/>
    <property type="match status" value="1"/>
</dbReference>
<accession>Q8ZA97</accession>
<accession>Q0WA99</accession>
<name>STHA_YERPE</name>
<comment type="function">
    <text evidence="1">Conversion of NADPH, generated by peripheral catabolic pathways, to NADH, which can enter the respiratory chain for energy generation.</text>
</comment>
<comment type="catalytic activity">
    <reaction evidence="1">
        <text>NAD(+) + NADPH = NADH + NADP(+)</text>
        <dbReference type="Rhea" id="RHEA:11692"/>
        <dbReference type="ChEBI" id="CHEBI:57540"/>
        <dbReference type="ChEBI" id="CHEBI:57783"/>
        <dbReference type="ChEBI" id="CHEBI:57945"/>
        <dbReference type="ChEBI" id="CHEBI:58349"/>
        <dbReference type="EC" id="1.6.1.1"/>
    </reaction>
</comment>
<comment type="cofactor">
    <cofactor evidence="1">
        <name>FAD</name>
        <dbReference type="ChEBI" id="CHEBI:57692"/>
    </cofactor>
    <text evidence="1">Binds 1 FAD per subunit.</text>
</comment>
<comment type="subcellular location">
    <subcellularLocation>
        <location evidence="1">Cytoplasm</location>
    </subcellularLocation>
</comment>
<comment type="similarity">
    <text evidence="1">Belongs to the class-I pyridine nucleotide-disulfide oxidoreductase family.</text>
</comment>
<comment type="sequence caution" evidence="2">
    <conflict type="erroneous initiation">
        <sequence resource="EMBL-CDS" id="AAM83912"/>
    </conflict>
</comment>
<gene>
    <name evidence="1" type="primary">sthA</name>
    <name evidence="1" type="synonym">udhA</name>
    <name type="ordered locus">YPO3914</name>
    <name type="ordered locus">y0321</name>
    <name type="ordered locus">YP_3134</name>
</gene>
<organism>
    <name type="scientific">Yersinia pestis</name>
    <dbReference type="NCBI Taxonomy" id="632"/>
    <lineage>
        <taxon>Bacteria</taxon>
        <taxon>Pseudomonadati</taxon>
        <taxon>Pseudomonadota</taxon>
        <taxon>Gammaproteobacteria</taxon>
        <taxon>Enterobacterales</taxon>
        <taxon>Yersiniaceae</taxon>
        <taxon>Yersinia</taxon>
    </lineage>
</organism>
<protein>
    <recommendedName>
        <fullName evidence="1">Soluble pyridine nucleotide transhydrogenase</fullName>
        <shortName evidence="1">STH</shortName>
        <ecNumber evidence="1">1.6.1.1</ecNumber>
    </recommendedName>
    <alternativeName>
        <fullName evidence="1">NAD(P)(+) transhydrogenase [B-specific]</fullName>
    </alternativeName>
</protein>
<sequence length="466" mass="51382">MQQHFHFDAIVIGSGPGGEGAAMGLVKQGARVAVIERYNNVGGGCTHWGTIPSKALRHAVSRIIEFNQNPLYSDNARTIKSSFADILNHADRVINQQTRMRQGFYDRNHCHMFSGDASFIDANTVNVRYADGTSDTLQADNIVIATGSRPYRPVNVDFNHERIYDSDTILQLSHEPQHVIIYGAGVIGCEYASIFRGLSVKVDLINTRDRLLAFLDQEMSDALSYHFWNNGVVIRHNEEFEQIEGTTDGVIVHLKSGKKVKADCLLYANGRTGNTSGLGLENIGLEADSRGLLKVNSMYQTALSHVYAVGDVIGYPSLASAAYDQGRIAAQAMIKGEANVHLIEDIPTGIYTIPEISSVGKTEQELTAMKVPYEVGRAQFKHLARAQIVGMDTGSLKILFHRETKQILGIHCFGERAAEIIHIGQAIMEQKGEGNTLEYFVNTTFNYPTMAEAYRVAALNGLNRLF</sequence>
<keyword id="KW-0963">Cytoplasm</keyword>
<keyword id="KW-0274">FAD</keyword>
<keyword id="KW-0285">Flavoprotein</keyword>
<keyword id="KW-0520">NAD</keyword>
<keyword id="KW-0521">NADP</keyword>
<keyword id="KW-0560">Oxidoreductase</keyword>
<keyword id="KW-1185">Reference proteome</keyword>
<evidence type="ECO:0000255" key="1">
    <source>
        <dbReference type="HAMAP-Rule" id="MF_00247"/>
    </source>
</evidence>
<evidence type="ECO:0000305" key="2"/>
<reference key="1">
    <citation type="journal article" date="2001" name="Nature">
        <title>Genome sequence of Yersinia pestis, the causative agent of plague.</title>
        <authorList>
            <person name="Parkhill J."/>
            <person name="Wren B.W."/>
            <person name="Thomson N.R."/>
            <person name="Titball R.W."/>
            <person name="Holden M.T.G."/>
            <person name="Prentice M.B."/>
            <person name="Sebaihia M."/>
            <person name="James K.D."/>
            <person name="Churcher C.M."/>
            <person name="Mungall K.L."/>
            <person name="Baker S."/>
            <person name="Basham D."/>
            <person name="Bentley S.D."/>
            <person name="Brooks K."/>
            <person name="Cerdeno-Tarraga A.-M."/>
            <person name="Chillingworth T."/>
            <person name="Cronin A."/>
            <person name="Davies R.M."/>
            <person name="Davis P."/>
            <person name="Dougan G."/>
            <person name="Feltwell T."/>
            <person name="Hamlin N."/>
            <person name="Holroyd S."/>
            <person name="Jagels K."/>
            <person name="Karlyshev A.V."/>
            <person name="Leather S."/>
            <person name="Moule S."/>
            <person name="Oyston P.C.F."/>
            <person name="Quail M.A."/>
            <person name="Rutherford K.M."/>
            <person name="Simmonds M."/>
            <person name="Skelton J."/>
            <person name="Stevens K."/>
            <person name="Whitehead S."/>
            <person name="Barrell B.G."/>
        </authorList>
    </citation>
    <scope>NUCLEOTIDE SEQUENCE [LARGE SCALE GENOMIC DNA]</scope>
    <source>
        <strain>CO-92 / Biovar Orientalis</strain>
    </source>
</reference>
<reference key="2">
    <citation type="journal article" date="2002" name="J. Bacteriol.">
        <title>Genome sequence of Yersinia pestis KIM.</title>
        <authorList>
            <person name="Deng W."/>
            <person name="Burland V."/>
            <person name="Plunkett G. III"/>
            <person name="Boutin A."/>
            <person name="Mayhew G.F."/>
            <person name="Liss P."/>
            <person name="Perna N.T."/>
            <person name="Rose D.J."/>
            <person name="Mau B."/>
            <person name="Zhou S."/>
            <person name="Schwartz D.C."/>
            <person name="Fetherston J.D."/>
            <person name="Lindler L.E."/>
            <person name="Brubaker R.R."/>
            <person name="Plano G.V."/>
            <person name="Straley S.C."/>
            <person name="McDonough K.A."/>
            <person name="Nilles M.L."/>
            <person name="Matson J.S."/>
            <person name="Blattner F.R."/>
            <person name="Perry R.D."/>
        </authorList>
    </citation>
    <scope>NUCLEOTIDE SEQUENCE [LARGE SCALE GENOMIC DNA]</scope>
    <source>
        <strain>KIM10+ / Biovar Mediaevalis</strain>
    </source>
</reference>
<reference key="3">
    <citation type="journal article" date="2004" name="DNA Res.">
        <title>Complete genome sequence of Yersinia pestis strain 91001, an isolate avirulent to humans.</title>
        <authorList>
            <person name="Song Y."/>
            <person name="Tong Z."/>
            <person name="Wang J."/>
            <person name="Wang L."/>
            <person name="Guo Z."/>
            <person name="Han Y."/>
            <person name="Zhang J."/>
            <person name="Pei D."/>
            <person name="Zhou D."/>
            <person name="Qin H."/>
            <person name="Pang X."/>
            <person name="Han Y."/>
            <person name="Zhai J."/>
            <person name="Li M."/>
            <person name="Cui B."/>
            <person name="Qi Z."/>
            <person name="Jin L."/>
            <person name="Dai R."/>
            <person name="Chen F."/>
            <person name="Li S."/>
            <person name="Ye C."/>
            <person name="Du Z."/>
            <person name="Lin W."/>
            <person name="Wang J."/>
            <person name="Yu J."/>
            <person name="Yang H."/>
            <person name="Wang J."/>
            <person name="Huang P."/>
            <person name="Yang R."/>
        </authorList>
    </citation>
    <scope>NUCLEOTIDE SEQUENCE [LARGE SCALE GENOMIC DNA]</scope>
    <source>
        <strain>91001 / Biovar Mediaevalis</strain>
    </source>
</reference>
<feature type="chain" id="PRO_0000068079" description="Soluble pyridine nucleotide transhydrogenase">
    <location>
        <begin position="1"/>
        <end position="466"/>
    </location>
</feature>
<feature type="binding site" evidence="1">
    <location>
        <begin position="36"/>
        <end position="45"/>
    </location>
    <ligand>
        <name>FAD</name>
        <dbReference type="ChEBI" id="CHEBI:57692"/>
    </ligand>
</feature>
<proteinExistence type="inferred from homology"/>